<feature type="chain" id="PRO_0000335013" description="Glutamyl-tRNA reductase">
    <location>
        <begin position="1"/>
        <end position="434"/>
    </location>
</feature>
<feature type="active site" description="Nucleophile" evidence="1">
    <location>
        <position position="58"/>
    </location>
</feature>
<feature type="binding site" evidence="1">
    <location>
        <begin position="57"/>
        <end position="60"/>
    </location>
    <ligand>
        <name>substrate</name>
    </ligand>
</feature>
<feature type="binding site" evidence="1">
    <location>
        <position position="116"/>
    </location>
    <ligand>
        <name>substrate</name>
    </ligand>
</feature>
<feature type="binding site" evidence="1">
    <location>
        <begin position="121"/>
        <end position="123"/>
    </location>
    <ligand>
        <name>substrate</name>
    </ligand>
</feature>
<feature type="binding site" evidence="1">
    <location>
        <position position="127"/>
    </location>
    <ligand>
        <name>substrate</name>
    </ligand>
</feature>
<feature type="binding site" evidence="1">
    <location>
        <begin position="196"/>
        <end position="201"/>
    </location>
    <ligand>
        <name>NADP(+)</name>
        <dbReference type="ChEBI" id="CHEBI:58349"/>
    </ligand>
</feature>
<feature type="site" description="Important for activity" evidence="1">
    <location>
        <position position="106"/>
    </location>
</feature>
<sequence length="434" mass="47546">MDMQLLTIGINHHTAPVALRERVAFPLEQIKPALSTFKSVFLGHPAPNAPEAAILSTCNRTELYCATNDRAARDAAIRWMSDYHRIPADELAPHVYALPQSEAVRHAFRVASGLDSMVLGETQILGQMKNAVRTASEAGSLGTYLNQLFQRTFAVAKEVRGTTEIGAQSVSMAAAAVRLAQRIFEQVAQQRVLFIGAGEMIELCATHFAAQGPRELVVANRTAERGAKLAERFGGRAMPLADLPARMHEFDIIVSCTASTLPIIGLGAVERAVKARRHRPIFMVDLAVPRDIEPEVGKLKDVFLYTVDDLGAIVREGNASRQAAVAQAEAIIETRVQNFMQWLDARSIVPVIRHMHTQADALRRAEVERARKMLARGDDPDAVLDALSQALTNKLIHGPTSALNRANGADRDSLIDLMRGFYQHAPRSSDTSDR</sequence>
<comment type="function">
    <text evidence="1">Catalyzes the NADPH-dependent reduction of glutamyl-tRNA(Glu) to glutamate 1-semialdehyde (GSA).</text>
</comment>
<comment type="catalytic activity">
    <reaction evidence="1">
        <text>(S)-4-amino-5-oxopentanoate + tRNA(Glu) + NADP(+) = L-glutamyl-tRNA(Glu) + NADPH + H(+)</text>
        <dbReference type="Rhea" id="RHEA:12344"/>
        <dbReference type="Rhea" id="RHEA-COMP:9663"/>
        <dbReference type="Rhea" id="RHEA-COMP:9680"/>
        <dbReference type="ChEBI" id="CHEBI:15378"/>
        <dbReference type="ChEBI" id="CHEBI:57501"/>
        <dbReference type="ChEBI" id="CHEBI:57783"/>
        <dbReference type="ChEBI" id="CHEBI:58349"/>
        <dbReference type="ChEBI" id="CHEBI:78442"/>
        <dbReference type="ChEBI" id="CHEBI:78520"/>
        <dbReference type="EC" id="1.2.1.70"/>
    </reaction>
</comment>
<comment type="pathway">
    <text evidence="1">Porphyrin-containing compound metabolism; protoporphyrin-IX biosynthesis; 5-aminolevulinate from L-glutamyl-tRNA(Glu): step 1/2.</text>
</comment>
<comment type="subunit">
    <text evidence="1">Homodimer.</text>
</comment>
<comment type="domain">
    <text evidence="1">Possesses an unusual extended V-shaped dimeric structure with each monomer consisting of three distinct domains arranged along a curved 'spinal' alpha-helix. The N-terminal catalytic domain specifically recognizes the glutamate moiety of the substrate. The second domain is the NADPH-binding domain, and the third C-terminal domain is responsible for dimerization.</text>
</comment>
<comment type="miscellaneous">
    <text evidence="1">During catalysis, the active site Cys acts as a nucleophile attacking the alpha-carbonyl group of tRNA-bound glutamate with the formation of a thioester intermediate between enzyme and glutamate, and the concomitant release of tRNA(Glu). The thioester intermediate is finally reduced by direct hydride transfer from NADPH, to form the product GSA.</text>
</comment>
<comment type="similarity">
    <text evidence="1">Belongs to the glutamyl-tRNA reductase family.</text>
</comment>
<dbReference type="EC" id="1.2.1.70" evidence="1"/>
<dbReference type="EMBL" id="CP000545">
    <property type="protein sequence ID" value="ABN00173.1"/>
    <property type="molecule type" value="Genomic_DNA"/>
</dbReference>
<dbReference type="SMR" id="A2RYL1"/>
<dbReference type="KEGG" id="bml:BMA10229_0971"/>
<dbReference type="HOGENOM" id="CLU_035113_2_2_4"/>
<dbReference type="UniPathway" id="UPA00251">
    <property type="reaction ID" value="UER00316"/>
</dbReference>
<dbReference type="Proteomes" id="UP000002283">
    <property type="component" value="Chromosome II"/>
</dbReference>
<dbReference type="GO" id="GO:0008883">
    <property type="term" value="F:glutamyl-tRNA reductase activity"/>
    <property type="evidence" value="ECO:0007669"/>
    <property type="project" value="UniProtKB-UniRule"/>
</dbReference>
<dbReference type="GO" id="GO:0050661">
    <property type="term" value="F:NADP binding"/>
    <property type="evidence" value="ECO:0007669"/>
    <property type="project" value="InterPro"/>
</dbReference>
<dbReference type="GO" id="GO:0019353">
    <property type="term" value="P:protoporphyrinogen IX biosynthetic process from glutamate"/>
    <property type="evidence" value="ECO:0007669"/>
    <property type="project" value="TreeGrafter"/>
</dbReference>
<dbReference type="CDD" id="cd05213">
    <property type="entry name" value="NAD_bind_Glutamyl_tRNA_reduct"/>
    <property type="match status" value="1"/>
</dbReference>
<dbReference type="FunFam" id="3.30.460.30:FF:000001">
    <property type="entry name" value="Glutamyl-tRNA reductase"/>
    <property type="match status" value="1"/>
</dbReference>
<dbReference type="FunFam" id="3.40.50.720:FF:000031">
    <property type="entry name" value="Glutamyl-tRNA reductase"/>
    <property type="match status" value="1"/>
</dbReference>
<dbReference type="Gene3D" id="3.30.460.30">
    <property type="entry name" value="Glutamyl-tRNA reductase, N-terminal domain"/>
    <property type="match status" value="1"/>
</dbReference>
<dbReference type="Gene3D" id="3.40.50.720">
    <property type="entry name" value="NAD(P)-binding Rossmann-like Domain"/>
    <property type="match status" value="1"/>
</dbReference>
<dbReference type="HAMAP" id="MF_00087">
    <property type="entry name" value="Glu_tRNA_reductase"/>
    <property type="match status" value="1"/>
</dbReference>
<dbReference type="InterPro" id="IPR000343">
    <property type="entry name" value="4pyrrol_synth_GluRdtase"/>
</dbReference>
<dbReference type="InterPro" id="IPR015896">
    <property type="entry name" value="4pyrrol_synth_GluRdtase_dimer"/>
</dbReference>
<dbReference type="InterPro" id="IPR015895">
    <property type="entry name" value="4pyrrol_synth_GluRdtase_N"/>
</dbReference>
<dbReference type="InterPro" id="IPR018214">
    <property type="entry name" value="GluRdtase_CS"/>
</dbReference>
<dbReference type="InterPro" id="IPR036453">
    <property type="entry name" value="GluRdtase_dimer_dom_sf"/>
</dbReference>
<dbReference type="InterPro" id="IPR036343">
    <property type="entry name" value="GluRdtase_N_sf"/>
</dbReference>
<dbReference type="InterPro" id="IPR036291">
    <property type="entry name" value="NAD(P)-bd_dom_sf"/>
</dbReference>
<dbReference type="InterPro" id="IPR006151">
    <property type="entry name" value="Shikm_DH/Glu-tRNA_Rdtase"/>
</dbReference>
<dbReference type="NCBIfam" id="TIGR01035">
    <property type="entry name" value="hemA"/>
    <property type="match status" value="1"/>
</dbReference>
<dbReference type="PANTHER" id="PTHR43013">
    <property type="entry name" value="GLUTAMYL-TRNA REDUCTASE"/>
    <property type="match status" value="1"/>
</dbReference>
<dbReference type="PANTHER" id="PTHR43013:SF1">
    <property type="entry name" value="GLUTAMYL-TRNA REDUCTASE"/>
    <property type="match status" value="1"/>
</dbReference>
<dbReference type="Pfam" id="PF00745">
    <property type="entry name" value="GlutR_dimer"/>
    <property type="match status" value="1"/>
</dbReference>
<dbReference type="Pfam" id="PF05201">
    <property type="entry name" value="GlutR_N"/>
    <property type="match status" value="1"/>
</dbReference>
<dbReference type="Pfam" id="PF01488">
    <property type="entry name" value="Shikimate_DH"/>
    <property type="match status" value="1"/>
</dbReference>
<dbReference type="PIRSF" id="PIRSF000445">
    <property type="entry name" value="4pyrrol_synth_GluRdtase"/>
    <property type="match status" value="1"/>
</dbReference>
<dbReference type="SUPFAM" id="SSF69742">
    <property type="entry name" value="Glutamyl tRNA-reductase catalytic, N-terminal domain"/>
    <property type="match status" value="1"/>
</dbReference>
<dbReference type="SUPFAM" id="SSF69075">
    <property type="entry name" value="Glutamyl tRNA-reductase dimerization domain"/>
    <property type="match status" value="1"/>
</dbReference>
<dbReference type="SUPFAM" id="SSF51735">
    <property type="entry name" value="NAD(P)-binding Rossmann-fold domains"/>
    <property type="match status" value="1"/>
</dbReference>
<dbReference type="PROSITE" id="PS00747">
    <property type="entry name" value="GLUTR"/>
    <property type="match status" value="1"/>
</dbReference>
<reference key="1">
    <citation type="journal article" date="2010" name="Genome Biol. Evol.">
        <title>Continuing evolution of Burkholderia mallei through genome reduction and large-scale rearrangements.</title>
        <authorList>
            <person name="Losada L."/>
            <person name="Ronning C.M."/>
            <person name="DeShazer D."/>
            <person name="Woods D."/>
            <person name="Fedorova N."/>
            <person name="Kim H.S."/>
            <person name="Shabalina S.A."/>
            <person name="Pearson T.R."/>
            <person name="Brinkac L."/>
            <person name="Tan P."/>
            <person name="Nandi T."/>
            <person name="Crabtree J."/>
            <person name="Badger J."/>
            <person name="Beckstrom-Sternberg S."/>
            <person name="Saqib M."/>
            <person name="Schutzer S.E."/>
            <person name="Keim P."/>
            <person name="Nierman W.C."/>
        </authorList>
    </citation>
    <scope>NUCLEOTIDE SEQUENCE [LARGE SCALE GENOMIC DNA]</scope>
    <source>
        <strain>NCTC 10229</strain>
    </source>
</reference>
<protein>
    <recommendedName>
        <fullName evidence="1">Glutamyl-tRNA reductase</fullName>
        <shortName evidence="1">GluTR</shortName>
        <ecNumber evidence="1">1.2.1.70</ecNumber>
    </recommendedName>
</protein>
<gene>
    <name evidence="1" type="primary">hemA</name>
    <name type="ordered locus">BMA10229_0971</name>
</gene>
<accession>A2RYL1</accession>
<proteinExistence type="inferred from homology"/>
<keyword id="KW-0521">NADP</keyword>
<keyword id="KW-0560">Oxidoreductase</keyword>
<keyword id="KW-0627">Porphyrin biosynthesis</keyword>
<organism>
    <name type="scientific">Burkholderia mallei (strain NCTC 10229)</name>
    <dbReference type="NCBI Taxonomy" id="412022"/>
    <lineage>
        <taxon>Bacteria</taxon>
        <taxon>Pseudomonadati</taxon>
        <taxon>Pseudomonadota</taxon>
        <taxon>Betaproteobacteria</taxon>
        <taxon>Burkholderiales</taxon>
        <taxon>Burkholderiaceae</taxon>
        <taxon>Burkholderia</taxon>
        <taxon>pseudomallei group</taxon>
    </lineage>
</organism>
<name>HEM1_BURM9</name>
<evidence type="ECO:0000255" key="1">
    <source>
        <dbReference type="HAMAP-Rule" id="MF_00087"/>
    </source>
</evidence>